<keyword id="KW-0378">Hydrolase</keyword>
<keyword id="KW-0479">Metal-binding</keyword>
<keyword id="KW-0823">Tryptophan catabolism</keyword>
<keyword id="KW-0862">Zinc</keyword>
<accession>A0REX1</accession>
<comment type="function">
    <text evidence="1">Catalyzes the hydrolysis of N-formyl-L-kynurenine to L-kynurenine, the second step in the kynurenine pathway of tryptophan degradation.</text>
</comment>
<comment type="catalytic activity">
    <reaction evidence="1">
        <text>N-formyl-L-kynurenine + H2O = L-kynurenine + formate + H(+)</text>
        <dbReference type="Rhea" id="RHEA:13009"/>
        <dbReference type="ChEBI" id="CHEBI:15377"/>
        <dbReference type="ChEBI" id="CHEBI:15378"/>
        <dbReference type="ChEBI" id="CHEBI:15740"/>
        <dbReference type="ChEBI" id="CHEBI:57959"/>
        <dbReference type="ChEBI" id="CHEBI:58629"/>
        <dbReference type="EC" id="3.5.1.9"/>
    </reaction>
</comment>
<comment type="cofactor">
    <cofactor evidence="1">
        <name>Zn(2+)</name>
        <dbReference type="ChEBI" id="CHEBI:29105"/>
    </cofactor>
    <text evidence="1">Binds 2 zinc ions per subunit.</text>
</comment>
<comment type="pathway">
    <text evidence="1">Amino-acid degradation; L-tryptophan degradation via kynurenine pathway; L-kynurenine from L-tryptophan: step 2/2.</text>
</comment>
<comment type="subunit">
    <text evidence="1">Homodimer.</text>
</comment>
<comment type="similarity">
    <text evidence="1">Belongs to the Cyclase 1 superfamily. KynB family.</text>
</comment>
<reference key="1">
    <citation type="journal article" date="2007" name="J. Bacteriol.">
        <title>The complete genome sequence of Bacillus thuringiensis Al Hakam.</title>
        <authorList>
            <person name="Challacombe J.F."/>
            <person name="Altherr M.R."/>
            <person name="Xie G."/>
            <person name="Bhotika S.S."/>
            <person name="Brown N."/>
            <person name="Bruce D."/>
            <person name="Campbell C.S."/>
            <person name="Campbell M.L."/>
            <person name="Chen J."/>
            <person name="Chertkov O."/>
            <person name="Cleland C."/>
            <person name="Dimitrijevic M."/>
            <person name="Doggett N.A."/>
            <person name="Fawcett J.J."/>
            <person name="Glavina T."/>
            <person name="Goodwin L.A."/>
            <person name="Green L.D."/>
            <person name="Han C.S."/>
            <person name="Hill K.K."/>
            <person name="Hitchcock P."/>
            <person name="Jackson P.J."/>
            <person name="Keim P."/>
            <person name="Kewalramani A.R."/>
            <person name="Longmire J."/>
            <person name="Lucas S."/>
            <person name="Malfatti S."/>
            <person name="Martinez D."/>
            <person name="McMurry K."/>
            <person name="Meincke L.J."/>
            <person name="Misra M."/>
            <person name="Moseman B.L."/>
            <person name="Mundt M."/>
            <person name="Munk A.C."/>
            <person name="Okinaka R.T."/>
            <person name="Parson-Quintana B."/>
            <person name="Reilly L.P."/>
            <person name="Richardson P."/>
            <person name="Robinson D.L."/>
            <person name="Saunders E."/>
            <person name="Tapia R."/>
            <person name="Tesmer J.G."/>
            <person name="Thayer N."/>
            <person name="Thompson L.S."/>
            <person name="Tice H."/>
            <person name="Ticknor L.O."/>
            <person name="Wills P.L."/>
            <person name="Gilna P."/>
            <person name="Brettin T.S."/>
        </authorList>
    </citation>
    <scope>NUCLEOTIDE SEQUENCE [LARGE SCALE GENOMIC DNA]</scope>
    <source>
        <strain>Al Hakam</strain>
    </source>
</reference>
<dbReference type="EC" id="3.5.1.9" evidence="1"/>
<dbReference type="EMBL" id="CP000485">
    <property type="protein sequence ID" value="ABK85764.1"/>
    <property type="molecule type" value="Genomic_DNA"/>
</dbReference>
<dbReference type="RefSeq" id="WP_000858063.1">
    <property type="nucleotide sequence ID" value="NC_008600.1"/>
</dbReference>
<dbReference type="SMR" id="A0REX1"/>
<dbReference type="KEGG" id="btl:BALH_2477"/>
<dbReference type="HOGENOM" id="CLU_030671_3_1_9"/>
<dbReference type="UniPathway" id="UPA00333">
    <property type="reaction ID" value="UER00454"/>
</dbReference>
<dbReference type="GO" id="GO:0004061">
    <property type="term" value="F:arylformamidase activity"/>
    <property type="evidence" value="ECO:0000250"/>
    <property type="project" value="UniProtKB"/>
</dbReference>
<dbReference type="GO" id="GO:0004328">
    <property type="term" value="F:formamidase activity"/>
    <property type="evidence" value="ECO:0007669"/>
    <property type="project" value="InterPro"/>
</dbReference>
<dbReference type="GO" id="GO:0008270">
    <property type="term" value="F:zinc ion binding"/>
    <property type="evidence" value="ECO:0007669"/>
    <property type="project" value="UniProtKB-UniRule"/>
</dbReference>
<dbReference type="GO" id="GO:0043420">
    <property type="term" value="P:anthranilate metabolic process"/>
    <property type="evidence" value="ECO:0000250"/>
    <property type="project" value="UniProtKB"/>
</dbReference>
<dbReference type="GO" id="GO:0019441">
    <property type="term" value="P:L-tryptophan catabolic process to kynurenine"/>
    <property type="evidence" value="ECO:0000250"/>
    <property type="project" value="UniProtKB"/>
</dbReference>
<dbReference type="FunFam" id="3.50.30.50:FF:000001">
    <property type="entry name" value="Kynurenine formamidase"/>
    <property type="match status" value="1"/>
</dbReference>
<dbReference type="Gene3D" id="3.50.30.50">
    <property type="entry name" value="Putative cyclase"/>
    <property type="match status" value="1"/>
</dbReference>
<dbReference type="HAMAP" id="MF_01969">
    <property type="entry name" value="KynB"/>
    <property type="match status" value="1"/>
</dbReference>
<dbReference type="InterPro" id="IPR007325">
    <property type="entry name" value="KFase/CYL"/>
</dbReference>
<dbReference type="InterPro" id="IPR037175">
    <property type="entry name" value="KFase_sf"/>
</dbReference>
<dbReference type="InterPro" id="IPR017484">
    <property type="entry name" value="Kynurenine_formamidase_bac"/>
</dbReference>
<dbReference type="NCBIfam" id="TIGR03035">
    <property type="entry name" value="trp_arylform"/>
    <property type="match status" value="1"/>
</dbReference>
<dbReference type="PANTHER" id="PTHR31118">
    <property type="entry name" value="CYCLASE-LIKE PROTEIN 2"/>
    <property type="match status" value="1"/>
</dbReference>
<dbReference type="PANTHER" id="PTHR31118:SF32">
    <property type="entry name" value="KYNURENINE FORMAMIDASE"/>
    <property type="match status" value="1"/>
</dbReference>
<dbReference type="Pfam" id="PF04199">
    <property type="entry name" value="Cyclase"/>
    <property type="match status" value="1"/>
</dbReference>
<dbReference type="SUPFAM" id="SSF102198">
    <property type="entry name" value="Putative cyclase"/>
    <property type="match status" value="1"/>
</dbReference>
<organism>
    <name type="scientific">Bacillus thuringiensis (strain Al Hakam)</name>
    <dbReference type="NCBI Taxonomy" id="412694"/>
    <lineage>
        <taxon>Bacteria</taxon>
        <taxon>Bacillati</taxon>
        <taxon>Bacillota</taxon>
        <taxon>Bacilli</taxon>
        <taxon>Bacillales</taxon>
        <taxon>Bacillaceae</taxon>
        <taxon>Bacillus</taxon>
        <taxon>Bacillus cereus group</taxon>
    </lineage>
</organism>
<gene>
    <name evidence="1" type="primary">kynB</name>
    <name type="ordered locus">BALH_2477</name>
</gene>
<protein>
    <recommendedName>
        <fullName evidence="1">Kynurenine formamidase</fullName>
        <shortName evidence="1">KFA</shortName>
        <shortName evidence="1">KFase</shortName>
        <ecNumber evidence="1">3.5.1.9</ecNumber>
    </recommendedName>
    <alternativeName>
        <fullName evidence="1">Arylformamidase</fullName>
    </alternativeName>
    <alternativeName>
        <fullName evidence="1">N-formylkynurenine formamidase</fullName>
        <shortName evidence="1">FKF</shortName>
    </alternativeName>
</protein>
<proteinExistence type="inferred from homology"/>
<sequence>MKTSEWIDISQPLNNDIATWPGDTPFSYEVSWSKEESGSVNVGKLTMSIHTGTHIDAPFHFDNEGKKVIDLDVQVYVGPARIIDVSNLESIGKKELEKFHLEGVERLLLRTSSHGKANEFPDIIPHLRADIAPFLSEKGIRLIGVDVPSVDPLDDKELAAHHQLFKHGIHILENVVLDHVADGDYELIALPLALSDADGSPVRAVIRPI</sequence>
<evidence type="ECO:0000255" key="1">
    <source>
        <dbReference type="HAMAP-Rule" id="MF_01969"/>
    </source>
</evidence>
<feature type="chain" id="PRO_0000362087" description="Kynurenine formamidase">
    <location>
        <begin position="1"/>
        <end position="209"/>
    </location>
</feature>
<feature type="active site" description="Proton donor/acceptor" evidence="1">
    <location>
        <position position="60"/>
    </location>
</feature>
<feature type="binding site" evidence="1">
    <location>
        <position position="20"/>
    </location>
    <ligand>
        <name>substrate</name>
    </ligand>
</feature>
<feature type="binding site" evidence="1">
    <location>
        <position position="50"/>
    </location>
    <ligand>
        <name>Zn(2+)</name>
        <dbReference type="ChEBI" id="CHEBI:29105"/>
        <label>1</label>
    </ligand>
</feature>
<feature type="binding site" evidence="1">
    <location>
        <position position="54"/>
    </location>
    <ligand>
        <name>Zn(2+)</name>
        <dbReference type="ChEBI" id="CHEBI:29105"/>
        <label>1</label>
    </ligand>
</feature>
<feature type="binding site" evidence="1">
    <location>
        <position position="56"/>
    </location>
    <ligand>
        <name>Zn(2+)</name>
        <dbReference type="ChEBI" id="CHEBI:29105"/>
        <label>1</label>
    </ligand>
</feature>
<feature type="binding site" evidence="1">
    <location>
        <position position="56"/>
    </location>
    <ligand>
        <name>Zn(2+)</name>
        <dbReference type="ChEBI" id="CHEBI:29105"/>
        <label>2</label>
    </ligand>
</feature>
<feature type="binding site" evidence="1">
    <location>
        <position position="161"/>
    </location>
    <ligand>
        <name>Zn(2+)</name>
        <dbReference type="ChEBI" id="CHEBI:29105"/>
        <label>2</label>
    </ligand>
</feature>
<feature type="binding site" evidence="1">
    <location>
        <position position="173"/>
    </location>
    <ligand>
        <name>Zn(2+)</name>
        <dbReference type="ChEBI" id="CHEBI:29105"/>
        <label>1</label>
    </ligand>
</feature>
<feature type="binding site" evidence="1">
    <location>
        <position position="173"/>
    </location>
    <ligand>
        <name>Zn(2+)</name>
        <dbReference type="ChEBI" id="CHEBI:29105"/>
        <label>2</label>
    </ligand>
</feature>
<name>KYNB_BACAH</name>